<dbReference type="EC" id="2.3.1.35" evidence="1"/>
<dbReference type="EMBL" id="AE009439">
    <property type="protein sequence ID" value="AAM02078.1"/>
    <property type="molecule type" value="Genomic_DNA"/>
</dbReference>
<dbReference type="RefSeq" id="WP_011019233.1">
    <property type="nucleotide sequence ID" value="NC_003551.1"/>
</dbReference>
<dbReference type="SMR" id="Q8TX15"/>
<dbReference type="FunCoup" id="Q8TX15">
    <property type="interactions" value="165"/>
</dbReference>
<dbReference type="STRING" id="190192.MK0865"/>
<dbReference type="MEROPS" id="T05.002"/>
<dbReference type="PaxDb" id="190192-MK0865"/>
<dbReference type="EnsemblBacteria" id="AAM02078">
    <property type="protein sequence ID" value="AAM02078"/>
    <property type="gene ID" value="MK0865"/>
</dbReference>
<dbReference type="GeneID" id="1476966"/>
<dbReference type="KEGG" id="mka:MK0865"/>
<dbReference type="PATRIC" id="fig|190192.8.peg.907"/>
<dbReference type="HOGENOM" id="CLU_027172_1_0_2"/>
<dbReference type="InParanoid" id="Q8TX15"/>
<dbReference type="OrthoDB" id="52592at2157"/>
<dbReference type="UniPathway" id="UPA00068">
    <property type="reaction ID" value="UER00111"/>
</dbReference>
<dbReference type="Proteomes" id="UP000001826">
    <property type="component" value="Chromosome"/>
</dbReference>
<dbReference type="GO" id="GO:0005737">
    <property type="term" value="C:cytoplasm"/>
    <property type="evidence" value="ECO:0007669"/>
    <property type="project" value="UniProtKB-SubCell"/>
</dbReference>
<dbReference type="GO" id="GO:0004358">
    <property type="term" value="F:glutamate N-acetyltransferase activity"/>
    <property type="evidence" value="ECO:0007669"/>
    <property type="project" value="UniProtKB-UniRule"/>
</dbReference>
<dbReference type="GO" id="GO:0004042">
    <property type="term" value="F:L-glutamate N-acetyltransferase activity"/>
    <property type="evidence" value="ECO:0007669"/>
    <property type="project" value="UniProtKB-UniRule"/>
</dbReference>
<dbReference type="GO" id="GO:0006526">
    <property type="term" value="P:L-arginine biosynthetic process"/>
    <property type="evidence" value="ECO:0007669"/>
    <property type="project" value="UniProtKB-UniRule"/>
</dbReference>
<dbReference type="GO" id="GO:0006592">
    <property type="term" value="P:ornithine biosynthetic process"/>
    <property type="evidence" value="ECO:0007669"/>
    <property type="project" value="TreeGrafter"/>
</dbReference>
<dbReference type="CDD" id="cd02152">
    <property type="entry name" value="OAT"/>
    <property type="match status" value="1"/>
</dbReference>
<dbReference type="FunFam" id="3.10.20.340:FF:000001">
    <property type="entry name" value="Arginine biosynthesis bifunctional protein ArgJ, chloroplastic"/>
    <property type="match status" value="1"/>
</dbReference>
<dbReference type="Gene3D" id="3.10.20.340">
    <property type="entry name" value="ArgJ beta chain, C-terminal domain"/>
    <property type="match status" value="1"/>
</dbReference>
<dbReference type="Gene3D" id="3.60.70.12">
    <property type="entry name" value="L-amino peptidase D-ALA esterase/amidase"/>
    <property type="match status" value="1"/>
</dbReference>
<dbReference type="HAMAP" id="MF_01106">
    <property type="entry name" value="ArgJ"/>
    <property type="match status" value="1"/>
</dbReference>
<dbReference type="InterPro" id="IPR002813">
    <property type="entry name" value="Arg_biosynth_ArgJ"/>
</dbReference>
<dbReference type="InterPro" id="IPR016117">
    <property type="entry name" value="ArgJ-like_dom_sf"/>
</dbReference>
<dbReference type="InterPro" id="IPR042195">
    <property type="entry name" value="ArgJ_beta_C"/>
</dbReference>
<dbReference type="NCBIfam" id="TIGR00120">
    <property type="entry name" value="ArgJ"/>
    <property type="match status" value="1"/>
</dbReference>
<dbReference type="NCBIfam" id="NF003802">
    <property type="entry name" value="PRK05388.1"/>
    <property type="match status" value="1"/>
</dbReference>
<dbReference type="PANTHER" id="PTHR23100">
    <property type="entry name" value="ARGININE BIOSYNTHESIS BIFUNCTIONAL PROTEIN ARGJ"/>
    <property type="match status" value="1"/>
</dbReference>
<dbReference type="PANTHER" id="PTHR23100:SF0">
    <property type="entry name" value="ARGININE BIOSYNTHESIS BIFUNCTIONAL PROTEIN ARGJ, MITOCHONDRIAL"/>
    <property type="match status" value="1"/>
</dbReference>
<dbReference type="Pfam" id="PF01960">
    <property type="entry name" value="ArgJ"/>
    <property type="match status" value="1"/>
</dbReference>
<dbReference type="SUPFAM" id="SSF56266">
    <property type="entry name" value="DmpA/ArgJ-like"/>
    <property type="match status" value="1"/>
</dbReference>
<reference key="1">
    <citation type="journal article" date="2002" name="Proc. Natl. Acad. Sci. U.S.A.">
        <title>The complete genome of hyperthermophile Methanopyrus kandleri AV19 and monophyly of archaeal methanogens.</title>
        <authorList>
            <person name="Slesarev A.I."/>
            <person name="Mezhevaya K.V."/>
            <person name="Makarova K.S."/>
            <person name="Polushin N.N."/>
            <person name="Shcherbinina O.V."/>
            <person name="Shakhova V.V."/>
            <person name="Belova G.I."/>
            <person name="Aravind L."/>
            <person name="Natale D.A."/>
            <person name="Rogozin I.B."/>
            <person name="Tatusov R.L."/>
            <person name="Wolf Y.I."/>
            <person name="Stetter K.O."/>
            <person name="Malykh A.G."/>
            <person name="Koonin E.V."/>
            <person name="Kozyavkin S.A."/>
        </authorList>
    </citation>
    <scope>NUCLEOTIDE SEQUENCE [LARGE SCALE GENOMIC DNA]</scope>
    <source>
        <strain>AV19 / DSM 6324 / JCM 9639 / NBRC 100938</strain>
    </source>
</reference>
<name>ARGJ_METKA</name>
<proteinExistence type="inferred from homology"/>
<feature type="chain" id="PRO_0000002275" description="Glutamate N-acetyltransferase alpha chain" evidence="1">
    <location>
        <begin position="1"/>
        <end position="172"/>
    </location>
</feature>
<feature type="chain" id="PRO_0000002276" description="Glutamate N-acetyltransferase beta chain" evidence="1">
    <location>
        <begin position="173"/>
        <end position="387"/>
    </location>
</feature>
<feature type="active site" description="Nucleophile" evidence="1">
    <location>
        <position position="173"/>
    </location>
</feature>
<feature type="binding site" evidence="1">
    <location>
        <position position="140"/>
    </location>
    <ligand>
        <name>substrate</name>
    </ligand>
</feature>
<feature type="binding site" evidence="1">
    <location>
        <position position="162"/>
    </location>
    <ligand>
        <name>substrate</name>
    </ligand>
</feature>
<feature type="binding site" evidence="1">
    <location>
        <position position="173"/>
    </location>
    <ligand>
        <name>substrate</name>
    </ligand>
</feature>
<feature type="binding site" evidence="1">
    <location>
        <position position="257"/>
    </location>
    <ligand>
        <name>substrate</name>
    </ligand>
</feature>
<feature type="binding site" evidence="1">
    <location>
        <position position="382"/>
    </location>
    <ligand>
        <name>substrate</name>
    </ligand>
</feature>
<feature type="binding site" evidence="1">
    <location>
        <position position="387"/>
    </location>
    <ligand>
        <name>substrate</name>
    </ligand>
</feature>
<feature type="site" description="Involved in the stabilization of negative charge on the oxyanion by the formation of the oxyanion hole" evidence="1">
    <location>
        <position position="101"/>
    </location>
</feature>
<feature type="site" description="Involved in the stabilization of negative charge on the oxyanion by the formation of the oxyanion hole" evidence="1">
    <location>
        <position position="102"/>
    </location>
</feature>
<comment type="function">
    <text evidence="1">Catalyzes the transfer of the acetyl group from N(2)-acetylornithine to glutamate, forming N-acetylglutamate and L-ornithine.</text>
</comment>
<comment type="catalytic activity">
    <reaction evidence="1">
        <text>N(2)-acetyl-L-ornithine + L-glutamate = N-acetyl-L-glutamate + L-ornithine</text>
        <dbReference type="Rhea" id="RHEA:15349"/>
        <dbReference type="ChEBI" id="CHEBI:29985"/>
        <dbReference type="ChEBI" id="CHEBI:44337"/>
        <dbReference type="ChEBI" id="CHEBI:46911"/>
        <dbReference type="ChEBI" id="CHEBI:57805"/>
        <dbReference type="EC" id="2.3.1.35"/>
    </reaction>
</comment>
<comment type="pathway">
    <text evidence="1">Amino-acid biosynthesis; L-arginine biosynthesis; L-ornithine and N-acetyl-L-glutamate from L-glutamate and N(2)-acetyl-L-ornithine (cyclic): step 1/1.</text>
</comment>
<comment type="subunit">
    <text evidence="1">Heterotetramer of two alpha and two beta chains.</text>
</comment>
<comment type="subcellular location">
    <subcellularLocation>
        <location evidence="1">Cytoplasm</location>
    </subcellularLocation>
</comment>
<comment type="similarity">
    <text evidence="1">Belongs to the ArgJ family.</text>
</comment>
<organism>
    <name type="scientific">Methanopyrus kandleri (strain AV19 / DSM 6324 / JCM 9639 / NBRC 100938)</name>
    <dbReference type="NCBI Taxonomy" id="190192"/>
    <lineage>
        <taxon>Archaea</taxon>
        <taxon>Methanobacteriati</taxon>
        <taxon>Methanobacteriota</taxon>
        <taxon>Methanomada group</taxon>
        <taxon>Methanopyri</taxon>
        <taxon>Methanopyrales</taxon>
        <taxon>Methanopyraceae</taxon>
        <taxon>Methanopyrus</taxon>
    </lineage>
</organism>
<accession>Q8TX15</accession>
<sequence>MRAPEGFLLGGIKREGIGVGLIFSERRCAVAGTFTENTLRAAPVEHSEEVCDRGVARGVIVNSGHANAMTGEEGYQDVLRTAEAIAELMGAPEDEIVVCSTGVIGERPPVDKIVRYAREVWEDIGPTERHVREFSRAIMTTDTEEKIALYEGDGWSLLGIAKGAGMIHPNMSTMLAFLLTDVGAKPKELQMWLRDVVNDTFNMITVDGDESTNDSVVLLANGSSNLKVGSDVTITEFQRALEEVCTELAEKIVRDGEGATKLMIVCVHGASNEVEARRAARAIASSNLVKAALFGENPNWGRIGAAVGAARVDVDPDELRIAFRSSEGEIVTYEGGPVDFDEEKAKRVLSASEVEIVVDLGVGDASARAWGCDLTYEYVRINAEYRT</sequence>
<gene>
    <name evidence="1" type="primary">argJ</name>
    <name type="ordered locus">MK0865</name>
</gene>
<keyword id="KW-0012">Acyltransferase</keyword>
<keyword id="KW-0028">Amino-acid biosynthesis</keyword>
<keyword id="KW-0055">Arginine biosynthesis</keyword>
<keyword id="KW-0068">Autocatalytic cleavage</keyword>
<keyword id="KW-0963">Cytoplasm</keyword>
<keyword id="KW-1185">Reference proteome</keyword>
<keyword id="KW-0808">Transferase</keyword>
<protein>
    <recommendedName>
        <fullName evidence="1">Glutamate N-acetyltransferase</fullName>
        <ecNumber evidence="1">2.3.1.35</ecNumber>
    </recommendedName>
    <alternativeName>
        <fullName evidence="1">Ornithine acetyltransferase</fullName>
        <shortName evidence="1">OATase</shortName>
    </alternativeName>
    <alternativeName>
        <fullName evidence="1">Ornithine transacetylase</fullName>
    </alternativeName>
    <component>
        <recommendedName>
            <fullName evidence="1">Glutamate N-acetyltransferase alpha chain</fullName>
        </recommendedName>
    </component>
    <component>
        <recommendedName>
            <fullName evidence="1">Glutamate N-acetyltransferase beta chain</fullName>
        </recommendedName>
    </component>
</protein>
<evidence type="ECO:0000255" key="1">
    <source>
        <dbReference type="HAMAP-Rule" id="MF_01106"/>
    </source>
</evidence>